<name>PLY_XANCM</name>
<protein>
    <recommendedName>
        <fullName>Pectate lyase</fullName>
        <shortName>PL</shortName>
        <ecNumber>4.2.2.2</ecNumber>
    </recommendedName>
    <alternativeName>
        <fullName>PSTRU-3</fullName>
    </alternativeName>
</protein>
<sequence length="377" mass="40184">MKPKFSTAAAASLFVGSLLVVGVACADPALEVATTGWATQNGGTKGGSKAAAANIYTVKTAAELKSALKASVGSNGRIIKISGIIDVSEGKPYTTTSDMKSRARLDIPTKTTLIGITSNAEIREGYFYVKANDVIIRNITIENPWDPEPVWDPDDGSAGNWNSEYDGLTVEGATNVWVDHVTFTDGRRTDDQNGTANGRPKQHHDGAMDVKKGANFVTISYSAFKSHEKNDLIGSSDSASSTDSGKLKVTIHNTLFENISARAPRVRFGQVHLYNNYHVGSTSNKVYPFSHAHGVGKESKIFSERNVFDISGVSSCDKIAADYGGSVYRDQGSLLNGKALTCSWNSNIGWTPPYTYSLLSADKVAADVKAKAGAGKL</sequence>
<accession>Q56806</accession>
<reference key="1">
    <citation type="journal article" date="1996" name="Mol. Plant Microbe Interact.">
        <title>Cloning of a pectate lyase gene from Xanthomonas campestris pv. malvacearum and comparison of its sequence relationship with pel genes of soft-rot Erwinia and Pseudomonas.</title>
        <authorList>
            <person name="Liao C.H."/>
            <person name="Gaffney T.D."/>
            <person name="Bradley S.P."/>
            <person name="Wong L.C."/>
        </authorList>
    </citation>
    <scope>NUCLEOTIDE SEQUENCE [GENOMIC DNA]</scope>
    <source>
        <strain>B-414</strain>
    </source>
</reference>
<proteinExistence type="inferred from homology"/>
<evidence type="ECO:0000250" key="1"/>
<evidence type="ECO:0000255" key="2"/>
<evidence type="ECO:0000256" key="3">
    <source>
        <dbReference type="SAM" id="MobiDB-lite"/>
    </source>
</evidence>
<evidence type="ECO:0000305" key="4"/>
<dbReference type="EC" id="4.2.2.2"/>
<dbReference type="EMBL" id="L38573">
    <property type="protein sequence ID" value="AAC41522.1"/>
    <property type="molecule type" value="Genomic_DNA"/>
</dbReference>
<dbReference type="SMR" id="Q56806"/>
<dbReference type="CAZy" id="PL1">
    <property type="family name" value="Polysaccharide Lyase Family 1"/>
</dbReference>
<dbReference type="UniPathway" id="UPA00545">
    <property type="reaction ID" value="UER00824"/>
</dbReference>
<dbReference type="GO" id="GO:0005576">
    <property type="term" value="C:extracellular region"/>
    <property type="evidence" value="ECO:0007669"/>
    <property type="project" value="UniProtKB-SubCell"/>
</dbReference>
<dbReference type="GO" id="GO:0046872">
    <property type="term" value="F:metal ion binding"/>
    <property type="evidence" value="ECO:0007669"/>
    <property type="project" value="UniProtKB-KW"/>
</dbReference>
<dbReference type="GO" id="GO:0030570">
    <property type="term" value="F:pectate lyase activity"/>
    <property type="evidence" value="ECO:0007669"/>
    <property type="project" value="UniProtKB-EC"/>
</dbReference>
<dbReference type="GO" id="GO:0045490">
    <property type="term" value="P:pectin catabolic process"/>
    <property type="evidence" value="ECO:0007669"/>
    <property type="project" value="UniProtKB-UniPathway"/>
</dbReference>
<dbReference type="Gene3D" id="2.160.20.10">
    <property type="entry name" value="Single-stranded right-handed beta-helix, Pectin lyase-like"/>
    <property type="match status" value="1"/>
</dbReference>
<dbReference type="InterPro" id="IPR002022">
    <property type="entry name" value="Pec_lyase"/>
</dbReference>
<dbReference type="InterPro" id="IPR012334">
    <property type="entry name" value="Pectin_lyas_fold"/>
</dbReference>
<dbReference type="InterPro" id="IPR011050">
    <property type="entry name" value="Pectin_lyase_fold/virulence"/>
</dbReference>
<dbReference type="InterPro" id="IPR045032">
    <property type="entry name" value="PEL"/>
</dbReference>
<dbReference type="PANTHER" id="PTHR31683">
    <property type="entry name" value="PECTATE LYASE 18-RELATED"/>
    <property type="match status" value="1"/>
</dbReference>
<dbReference type="PANTHER" id="PTHR31683:SF18">
    <property type="entry name" value="PECTATE LYASE 21-RELATED"/>
    <property type="match status" value="1"/>
</dbReference>
<dbReference type="Pfam" id="PF00544">
    <property type="entry name" value="Pectate_lyase_4"/>
    <property type="match status" value="1"/>
</dbReference>
<dbReference type="SMART" id="SM00656">
    <property type="entry name" value="Amb_all"/>
    <property type="match status" value="1"/>
</dbReference>
<dbReference type="SUPFAM" id="SSF51126">
    <property type="entry name" value="Pectin lyase-like"/>
    <property type="match status" value="1"/>
</dbReference>
<feature type="signal peptide" evidence="2">
    <location>
        <begin position="1"/>
        <end position="26"/>
    </location>
</feature>
<feature type="chain" id="PRO_0000024864" description="Pectate lyase">
    <location>
        <begin position="27"/>
        <end position="377"/>
    </location>
</feature>
<feature type="region of interest" description="Disordered" evidence="3">
    <location>
        <begin position="185"/>
        <end position="206"/>
    </location>
</feature>
<feature type="active site" evidence="2">
    <location>
        <position position="262"/>
    </location>
</feature>
<feature type="binding site" evidence="1">
    <location>
        <position position="166"/>
    </location>
    <ligand>
        <name>Ca(2+)</name>
        <dbReference type="ChEBI" id="CHEBI:29108"/>
    </ligand>
</feature>
<feature type="binding site" evidence="1">
    <location>
        <position position="205"/>
    </location>
    <ligand>
        <name>Ca(2+)</name>
        <dbReference type="ChEBI" id="CHEBI:29108"/>
    </ligand>
</feature>
<feature type="binding site" evidence="1">
    <location>
        <position position="209"/>
    </location>
    <ligand>
        <name>Ca(2+)</name>
        <dbReference type="ChEBI" id="CHEBI:29108"/>
    </ligand>
</feature>
<keyword id="KW-0106">Calcium</keyword>
<keyword id="KW-0456">Lyase</keyword>
<keyword id="KW-0479">Metal-binding</keyword>
<keyword id="KW-0964">Secreted</keyword>
<keyword id="KW-0732">Signal</keyword>
<organism>
    <name type="scientific">Xanthomonas campestris pv. malvacearum</name>
    <dbReference type="NCBI Taxonomy" id="86040"/>
    <lineage>
        <taxon>Bacteria</taxon>
        <taxon>Pseudomonadati</taxon>
        <taxon>Pseudomonadota</taxon>
        <taxon>Gammaproteobacteria</taxon>
        <taxon>Lysobacterales</taxon>
        <taxon>Lysobacteraceae</taxon>
        <taxon>Xanthomonas</taxon>
    </lineage>
</organism>
<comment type="function">
    <text>Plays a role in bacterial invasion of plants.</text>
</comment>
<comment type="catalytic activity">
    <reaction>
        <text>Eliminative cleavage of (1-&gt;4)-alpha-D-galacturonan to give oligosaccharides with 4-deoxy-alpha-D-galact-4-enuronosyl groups at their non-reducing ends.</text>
        <dbReference type="EC" id="4.2.2.2"/>
    </reaction>
</comment>
<comment type="cofactor">
    <cofactor evidence="1">
        <name>Ca(2+)</name>
        <dbReference type="ChEBI" id="CHEBI:29108"/>
    </cofactor>
    <text evidence="1">Binds 1 Ca(2+) ion per subunit.</text>
</comment>
<comment type="pathway">
    <text>Glycan metabolism; pectin degradation; 2-dehydro-3-deoxy-D-gluconate from pectin: step 2/5.</text>
</comment>
<comment type="subcellular location">
    <subcellularLocation>
        <location>Secreted</location>
    </subcellularLocation>
</comment>
<comment type="similarity">
    <text evidence="4">Belongs to the polysaccharide lyase 1 family.</text>
</comment>